<accession>Q46189</accession>
<dbReference type="EMBL" id="Z28353">
    <property type="protein sequence ID" value="CAA82208.1"/>
    <property type="molecule type" value="Genomic_DNA"/>
</dbReference>
<dbReference type="PIR" id="S38903">
    <property type="entry name" value="S38903"/>
</dbReference>
<dbReference type="SMR" id="Q46189"/>
<dbReference type="CDD" id="cd05121">
    <property type="entry name" value="ABC1_ADCK3-like"/>
    <property type="match status" value="1"/>
</dbReference>
<dbReference type="InterPro" id="IPR004147">
    <property type="entry name" value="ABC1_dom"/>
</dbReference>
<dbReference type="InterPro" id="IPR011009">
    <property type="entry name" value="Kinase-like_dom_sf"/>
</dbReference>
<dbReference type="InterPro" id="IPR050154">
    <property type="entry name" value="UbiB_kinase"/>
</dbReference>
<dbReference type="PANTHER" id="PTHR10566">
    <property type="entry name" value="CHAPERONE-ACTIVITY OF BC1 COMPLEX CABC1 -RELATED"/>
    <property type="match status" value="1"/>
</dbReference>
<dbReference type="PANTHER" id="PTHR10566:SF113">
    <property type="entry name" value="PROTEIN ACTIVITY OF BC1 COMPLEX KINASE 7, CHLOROPLASTIC"/>
    <property type="match status" value="1"/>
</dbReference>
<dbReference type="Pfam" id="PF03109">
    <property type="entry name" value="ABC1"/>
    <property type="match status" value="1"/>
</dbReference>
<dbReference type="SUPFAM" id="SSF56112">
    <property type="entry name" value="Protein kinase-like (PK-like)"/>
    <property type="match status" value="1"/>
</dbReference>
<comment type="similarity">
    <text evidence="1">Belongs to the protein kinase superfamily. ADCK protein kinase family.</text>
</comment>
<proteinExistence type="inferred from homology"/>
<feature type="chain" id="PRO_0000200736" description="Uncharacterized protein in hydrogenase 1 5'region">
    <location>
        <begin position="1" status="less than"/>
        <end position="530"/>
    </location>
</feature>
<feature type="non-terminal residue">
    <location>
        <position position="1"/>
    </location>
</feature>
<sequence length="530" mass="60349">NSVYRLKEIVKVLAYYGFGFIVDSKLNGNKKSPENLRKAFEELGPTFIKIGQILSTRPDLLPLPYIKELSKLQNNVPPENFIDIENLFFEELSSTIDNTFLYFDKTPIGSASIAQVHDAILKDGRFVIVKIQRPGIAEMMKTDLSIIKKLLNITKTKFTDALIDPKEAIDELFISTTQELDFINEINNIKKFKKLNEDVKFVRTPYTIDKLCTEKIIVMEKIVGIKIDNLKKLLNEGYDLEELGKKLTLSYFKQVFQDGFFHGDPHPGNLLIRENHICYIDFGIMGTISKSLKISLNDAILAVAYHDVNKMISVIMSIGVKKGYVNRNSLYESIEYLFDNYISVSLKNIKISVMLQEIFQISKNNNIKLPKELTMLLKSTLMIEGVIARISPELSIVDVLIPYVKSQNQNLFFRNFDFDNLLLNGFKFVKSSSEFPSKFVELSESIIRGRAKIQLQHNNLQKPIKDLNRMVNRMVFAIIISSMIIGSSLILRTNIGPKLHDISIIGISGFMIAALMGFYLLISILRSGTL</sequence>
<protein>
    <recommendedName>
        <fullName>Uncharacterized protein in hydrogenase 1 5'region</fullName>
    </recommendedName>
</protein>
<reference key="1">
    <citation type="submission" date="1993-11" db="EMBL/GenBank/DDBJ databases">
        <authorList>
            <person name="Meyer J."/>
        </authorList>
    </citation>
    <scope>NUCLEOTIDE SEQUENCE [GENOMIC DNA]</scope>
    <source>
        <strain>ATCC 6013 / DSM 525 / NCIB 9486 / VKM B-1774 / W5</strain>
    </source>
</reference>
<name>YHG1_CLOPA</name>
<organism>
    <name type="scientific">Clostridium pasteurianum</name>
    <dbReference type="NCBI Taxonomy" id="1501"/>
    <lineage>
        <taxon>Bacteria</taxon>
        <taxon>Bacillati</taxon>
        <taxon>Bacillota</taxon>
        <taxon>Clostridia</taxon>
        <taxon>Eubacteriales</taxon>
        <taxon>Clostridiaceae</taxon>
        <taxon>Clostridium</taxon>
    </lineage>
</organism>
<evidence type="ECO:0000305" key="1"/>